<keyword id="KW-1185">Reference proteome</keyword>
<keyword id="KW-0687">Ribonucleoprotein</keyword>
<keyword id="KW-0689">Ribosomal protein</keyword>
<keyword id="KW-0694">RNA-binding</keyword>
<keyword id="KW-0699">rRNA-binding</keyword>
<feature type="chain" id="PRO_0000272841" description="Large ribosomal subunit protein uL23">
    <location>
        <begin position="1"/>
        <end position="100"/>
    </location>
</feature>
<protein>
    <recommendedName>
        <fullName evidence="1">Large ribosomal subunit protein uL23</fullName>
    </recommendedName>
    <alternativeName>
        <fullName evidence="2">50S ribosomal protein L23</fullName>
    </alternativeName>
</protein>
<reference key="1">
    <citation type="journal article" date="2002" name="Nat. Biotechnol.">
        <title>Genome sequence of the dissimilatory metal ion-reducing bacterium Shewanella oneidensis.</title>
        <authorList>
            <person name="Heidelberg J.F."/>
            <person name="Paulsen I.T."/>
            <person name="Nelson K.E."/>
            <person name="Gaidos E.J."/>
            <person name="Nelson W.C."/>
            <person name="Read T.D."/>
            <person name="Eisen J.A."/>
            <person name="Seshadri R."/>
            <person name="Ward N.L."/>
            <person name="Methe B.A."/>
            <person name="Clayton R.A."/>
            <person name="Meyer T."/>
            <person name="Tsapin A."/>
            <person name="Scott J."/>
            <person name="Beanan M.J."/>
            <person name="Brinkac L.M."/>
            <person name="Daugherty S.C."/>
            <person name="DeBoy R.T."/>
            <person name="Dodson R.J."/>
            <person name="Durkin A.S."/>
            <person name="Haft D.H."/>
            <person name="Kolonay J.F."/>
            <person name="Madupu R."/>
            <person name="Peterson J.D."/>
            <person name="Umayam L.A."/>
            <person name="White O."/>
            <person name="Wolf A.M."/>
            <person name="Vamathevan J.J."/>
            <person name="Weidman J.F."/>
            <person name="Impraim M."/>
            <person name="Lee K."/>
            <person name="Berry K.J."/>
            <person name="Lee C."/>
            <person name="Mueller J."/>
            <person name="Khouri H.M."/>
            <person name="Gill J."/>
            <person name="Utterback T.R."/>
            <person name="McDonald L.A."/>
            <person name="Feldblyum T.V."/>
            <person name="Smith H.O."/>
            <person name="Venter J.C."/>
            <person name="Nealson K.H."/>
            <person name="Fraser C.M."/>
        </authorList>
    </citation>
    <scope>NUCLEOTIDE SEQUENCE [LARGE SCALE GENOMIC DNA]</scope>
    <source>
        <strain>ATCC 700550 / JCM 31522 / CIP 106686 / LMG 19005 / NCIMB 14063 / MR-1</strain>
    </source>
</reference>
<accession>Q8EK66</accession>
<evidence type="ECO:0000255" key="1">
    <source>
        <dbReference type="HAMAP-Rule" id="MF_01369"/>
    </source>
</evidence>
<evidence type="ECO:0000305" key="2"/>
<sequence>MIREERLLKVILAPHISEKSTVNAEKHNTVVFRVAIDATKAEIKAAVAKLFEVEVESVRTLVSKGKTKRTGGRTGRRSDWKKAYVTLAAGADIDFVGGAE</sequence>
<organism>
    <name type="scientific">Shewanella oneidensis (strain ATCC 700550 / JCM 31522 / CIP 106686 / LMG 19005 / NCIMB 14063 / MR-1)</name>
    <dbReference type="NCBI Taxonomy" id="211586"/>
    <lineage>
        <taxon>Bacteria</taxon>
        <taxon>Pseudomonadati</taxon>
        <taxon>Pseudomonadota</taxon>
        <taxon>Gammaproteobacteria</taxon>
        <taxon>Alteromonadales</taxon>
        <taxon>Shewanellaceae</taxon>
        <taxon>Shewanella</taxon>
    </lineage>
</organism>
<name>RL23_SHEON</name>
<gene>
    <name evidence="1" type="primary">rplW</name>
    <name type="ordered locus">SO_0233</name>
</gene>
<comment type="function">
    <text evidence="1">One of the early assembly proteins it binds 23S rRNA. One of the proteins that surrounds the polypeptide exit tunnel on the outside of the ribosome. Forms the main docking site for trigger factor binding to the ribosome.</text>
</comment>
<comment type="subunit">
    <text evidence="1">Part of the 50S ribosomal subunit. Contacts protein L29, and trigger factor when it is bound to the ribosome.</text>
</comment>
<comment type="similarity">
    <text evidence="1">Belongs to the universal ribosomal protein uL23 family.</text>
</comment>
<comment type="sequence caution" evidence="2">
    <conflict type="erroneous initiation">
        <sequence resource="EMBL-CDS" id="AAN53318"/>
    </conflict>
</comment>
<proteinExistence type="inferred from homology"/>
<dbReference type="EMBL" id="AE014299">
    <property type="protein sequence ID" value="AAN53318.1"/>
    <property type="status" value="ALT_INIT"/>
    <property type="molecule type" value="Genomic_DNA"/>
</dbReference>
<dbReference type="RefSeq" id="NP_715873.1">
    <property type="nucleotide sequence ID" value="NC_004347.2"/>
</dbReference>
<dbReference type="RefSeq" id="WP_037421480.1">
    <property type="nucleotide sequence ID" value="NZ_CP053946.1"/>
</dbReference>
<dbReference type="SMR" id="Q8EK66"/>
<dbReference type="STRING" id="211586.SO_0233"/>
<dbReference type="PaxDb" id="211586-SO_0233"/>
<dbReference type="GeneID" id="75190616"/>
<dbReference type="KEGG" id="son:SO_0233"/>
<dbReference type="PATRIC" id="fig|211586.12.peg.221"/>
<dbReference type="eggNOG" id="COG0089">
    <property type="taxonomic scope" value="Bacteria"/>
</dbReference>
<dbReference type="HOGENOM" id="CLU_037562_3_1_6"/>
<dbReference type="OrthoDB" id="9793353at2"/>
<dbReference type="PhylomeDB" id="Q8EK66"/>
<dbReference type="Proteomes" id="UP000008186">
    <property type="component" value="Chromosome"/>
</dbReference>
<dbReference type="GO" id="GO:0022625">
    <property type="term" value="C:cytosolic large ribosomal subunit"/>
    <property type="evidence" value="ECO:0000318"/>
    <property type="project" value="GO_Central"/>
</dbReference>
<dbReference type="GO" id="GO:0019843">
    <property type="term" value="F:rRNA binding"/>
    <property type="evidence" value="ECO:0007669"/>
    <property type="project" value="UniProtKB-UniRule"/>
</dbReference>
<dbReference type="GO" id="GO:0003735">
    <property type="term" value="F:structural constituent of ribosome"/>
    <property type="evidence" value="ECO:0000318"/>
    <property type="project" value="GO_Central"/>
</dbReference>
<dbReference type="GO" id="GO:0006412">
    <property type="term" value="P:translation"/>
    <property type="evidence" value="ECO:0007669"/>
    <property type="project" value="UniProtKB-UniRule"/>
</dbReference>
<dbReference type="FunFam" id="3.30.70.330:FF:000001">
    <property type="entry name" value="50S ribosomal protein L23"/>
    <property type="match status" value="1"/>
</dbReference>
<dbReference type="Gene3D" id="3.30.70.330">
    <property type="match status" value="1"/>
</dbReference>
<dbReference type="HAMAP" id="MF_01369_B">
    <property type="entry name" value="Ribosomal_uL23_B"/>
    <property type="match status" value="1"/>
</dbReference>
<dbReference type="InterPro" id="IPR012677">
    <property type="entry name" value="Nucleotide-bd_a/b_plait_sf"/>
</dbReference>
<dbReference type="InterPro" id="IPR013025">
    <property type="entry name" value="Ribosomal_uL23-like"/>
</dbReference>
<dbReference type="InterPro" id="IPR012678">
    <property type="entry name" value="Ribosomal_uL23/eL15/eS24_sf"/>
</dbReference>
<dbReference type="InterPro" id="IPR001014">
    <property type="entry name" value="Ribosomal_uL23_CS"/>
</dbReference>
<dbReference type="NCBIfam" id="NF004358">
    <property type="entry name" value="PRK05738.1-1"/>
    <property type="match status" value="1"/>
</dbReference>
<dbReference type="NCBIfam" id="NF004359">
    <property type="entry name" value="PRK05738.1-3"/>
    <property type="match status" value="1"/>
</dbReference>
<dbReference type="NCBIfam" id="NF004363">
    <property type="entry name" value="PRK05738.2-4"/>
    <property type="match status" value="1"/>
</dbReference>
<dbReference type="PANTHER" id="PTHR11620">
    <property type="entry name" value="60S RIBOSOMAL PROTEIN L23A"/>
    <property type="match status" value="1"/>
</dbReference>
<dbReference type="Pfam" id="PF00276">
    <property type="entry name" value="Ribosomal_L23"/>
    <property type="match status" value="1"/>
</dbReference>
<dbReference type="SUPFAM" id="SSF54189">
    <property type="entry name" value="Ribosomal proteins S24e, L23 and L15e"/>
    <property type="match status" value="1"/>
</dbReference>
<dbReference type="PROSITE" id="PS00050">
    <property type="entry name" value="RIBOSOMAL_L23"/>
    <property type="match status" value="1"/>
</dbReference>